<name>PA2AA_PSEFE</name>
<dbReference type="EC" id="3.1.1.4"/>
<dbReference type="SMR" id="P0DKR3"/>
<dbReference type="GO" id="GO:0005576">
    <property type="term" value="C:extracellular region"/>
    <property type="evidence" value="ECO:0007669"/>
    <property type="project" value="UniProtKB-SubCell"/>
</dbReference>
<dbReference type="GO" id="GO:0005509">
    <property type="term" value="F:calcium ion binding"/>
    <property type="evidence" value="ECO:0007669"/>
    <property type="project" value="InterPro"/>
</dbReference>
<dbReference type="GO" id="GO:0047498">
    <property type="term" value="F:calcium-dependent phospholipase A2 activity"/>
    <property type="evidence" value="ECO:0007669"/>
    <property type="project" value="TreeGrafter"/>
</dbReference>
<dbReference type="GO" id="GO:0005543">
    <property type="term" value="F:phospholipid binding"/>
    <property type="evidence" value="ECO:0007669"/>
    <property type="project" value="TreeGrafter"/>
</dbReference>
<dbReference type="GO" id="GO:0090729">
    <property type="term" value="F:toxin activity"/>
    <property type="evidence" value="ECO:0007669"/>
    <property type="project" value="UniProtKB-KW"/>
</dbReference>
<dbReference type="GO" id="GO:0050482">
    <property type="term" value="P:arachidonate secretion"/>
    <property type="evidence" value="ECO:0007669"/>
    <property type="project" value="InterPro"/>
</dbReference>
<dbReference type="GO" id="GO:0016042">
    <property type="term" value="P:lipid catabolic process"/>
    <property type="evidence" value="ECO:0007669"/>
    <property type="project" value="InterPro"/>
</dbReference>
<dbReference type="GO" id="GO:0006644">
    <property type="term" value="P:phospholipid metabolic process"/>
    <property type="evidence" value="ECO:0007669"/>
    <property type="project" value="InterPro"/>
</dbReference>
<dbReference type="CDD" id="cd00125">
    <property type="entry name" value="PLA2c"/>
    <property type="match status" value="1"/>
</dbReference>
<dbReference type="FunFam" id="1.20.90.10:FF:000001">
    <property type="entry name" value="Basic phospholipase A2 homolog"/>
    <property type="match status" value="1"/>
</dbReference>
<dbReference type="Gene3D" id="1.20.90.10">
    <property type="entry name" value="Phospholipase A2 domain"/>
    <property type="match status" value="1"/>
</dbReference>
<dbReference type="InterPro" id="IPR001211">
    <property type="entry name" value="PLipase_A2"/>
</dbReference>
<dbReference type="InterPro" id="IPR033112">
    <property type="entry name" value="PLipase_A2_Asp_AS"/>
</dbReference>
<dbReference type="InterPro" id="IPR016090">
    <property type="entry name" value="PLipase_A2_dom"/>
</dbReference>
<dbReference type="InterPro" id="IPR036444">
    <property type="entry name" value="PLipase_A2_dom_sf"/>
</dbReference>
<dbReference type="InterPro" id="IPR033113">
    <property type="entry name" value="PLipase_A2_His_AS"/>
</dbReference>
<dbReference type="PANTHER" id="PTHR11716:SF101">
    <property type="entry name" value="BASIC PHOSPHOLIPASE A2 PA-11-LIKE"/>
    <property type="match status" value="1"/>
</dbReference>
<dbReference type="PANTHER" id="PTHR11716">
    <property type="entry name" value="PHOSPHOLIPASE A2 FAMILY MEMBER"/>
    <property type="match status" value="1"/>
</dbReference>
<dbReference type="Pfam" id="PF00068">
    <property type="entry name" value="Phospholip_A2_1"/>
    <property type="match status" value="1"/>
</dbReference>
<dbReference type="PRINTS" id="PR00389">
    <property type="entry name" value="PHPHLIPASEA2"/>
</dbReference>
<dbReference type="SMART" id="SM00085">
    <property type="entry name" value="PA2c"/>
    <property type="match status" value="1"/>
</dbReference>
<dbReference type="SUPFAM" id="SSF48619">
    <property type="entry name" value="Phospholipase A2, PLA2"/>
    <property type="match status" value="1"/>
</dbReference>
<dbReference type="PROSITE" id="PS00119">
    <property type="entry name" value="PA2_ASP"/>
    <property type="match status" value="1"/>
</dbReference>
<dbReference type="PROSITE" id="PS00118">
    <property type="entry name" value="PA2_HIS"/>
    <property type="match status" value="1"/>
</dbReference>
<sequence>NLFQFGEMIFEKTGKEAVHSYAIYGCYCGWGGQGRAMDATDRCCFVHDCCYGRVNGCNPKMATYSTSFQNGDIVCGDNDLCLRAVCECDRAAAICLGQNVNTYNKNYEHYSISHCMEESEQC</sequence>
<reference key="1">
    <citation type="journal article" date="1995" name="Toxicon">
        <title>Amino acid sequences of a heterodimeric neurotoxin from the venom of the false horned viper (Pseudocerastes fieldi).</title>
        <authorList>
            <person name="Francis B."/>
            <person name="Bdolah A."/>
            <person name="Kaiser I.I."/>
        </authorList>
    </citation>
    <scope>PROTEIN SEQUENCE</scope>
    <scope>FUNCTION</scope>
    <source>
        <tissue>Venom</tissue>
    </source>
</reference>
<reference key="2">
    <citation type="journal article" date="1985" name="Biochem. Int.">
        <title>The neurotoxic complex from the venom of Pseudocerastes fieldi. Contribution of the nontoxic subunit.</title>
        <authorList>
            <person name="Bdolah A."/>
            <person name="Kinamon S."/>
            <person name="Batzri-Izraeli R."/>
        </authorList>
    </citation>
    <scope>SUBUNIT</scope>
</reference>
<reference key="3">
    <citation type="journal article" date="2007" name="BMC Struct. Biol.">
        <title>Characterization of a human coagulation factor Xa-binding site on Viperidae snake venom phospholipases A2 by affinity binding studies and molecular bioinformatics.</title>
        <authorList>
            <person name="Faure G."/>
            <person name="Gowda V.T."/>
            <person name="Maroun R.C."/>
        </authorList>
    </citation>
    <scope>FUNCTION AS AN ANTICOAGULANT</scope>
    <scope>3D-STRUCTURE MODELING</scope>
</reference>
<proteinExistence type="evidence at protein level"/>
<evidence type="ECO:0000250" key="1"/>
<evidence type="ECO:0000269" key="2">
    <source>
    </source>
</evidence>
<evidence type="ECO:0000305" key="3"/>
<protein>
    <recommendedName>
        <fullName>Acidic phospholipase A2 CbIalpha</fullName>
        <shortName>svPLA2</shortName>
        <ecNumber>3.1.1.4</ecNumber>
    </recommendedName>
    <alternativeName>
        <fullName>Phosphatidylcholine 2-acylhydrolase</fullName>
    </alternativeName>
</protein>
<keyword id="KW-0903">Direct protein sequencing</keyword>
<keyword id="KW-1015">Disulfide bond</keyword>
<keyword id="KW-0378">Hydrolase</keyword>
<keyword id="KW-0479">Metal-binding</keyword>
<keyword id="KW-0528">Neurotoxin</keyword>
<keyword id="KW-0638">Presynaptic neurotoxin</keyword>
<keyword id="KW-0964">Secreted</keyword>
<keyword id="KW-0800">Toxin</keyword>
<feature type="chain" id="PRO_0000420357" description="Acidic phospholipase A2 CbIalpha">
    <location>
        <begin position="1"/>
        <end position="122"/>
    </location>
</feature>
<feature type="active site" evidence="1">
    <location>
        <position position="47"/>
    </location>
</feature>
<feature type="active site" evidence="1">
    <location>
        <position position="89"/>
    </location>
</feature>
<feature type="binding site" evidence="1">
    <location>
        <position position="27"/>
    </location>
    <ligand>
        <name>Ca(2+)</name>
        <dbReference type="ChEBI" id="CHEBI:29108"/>
    </ligand>
</feature>
<feature type="binding site" evidence="1">
    <location>
        <position position="29"/>
    </location>
    <ligand>
        <name>Ca(2+)</name>
        <dbReference type="ChEBI" id="CHEBI:29108"/>
    </ligand>
</feature>
<feature type="binding site" evidence="1">
    <location>
        <position position="31"/>
    </location>
    <ligand>
        <name>Ca(2+)</name>
        <dbReference type="ChEBI" id="CHEBI:29108"/>
    </ligand>
</feature>
<feature type="binding site" evidence="1">
    <location>
        <position position="48"/>
    </location>
    <ligand>
        <name>Ca(2+)</name>
        <dbReference type="ChEBI" id="CHEBI:29108"/>
    </ligand>
</feature>
<feature type="disulfide bond" evidence="1">
    <location>
        <begin position="26"/>
        <end position="115"/>
    </location>
</feature>
<feature type="disulfide bond" evidence="1">
    <location>
        <begin position="28"/>
        <end position="44"/>
    </location>
</feature>
<feature type="disulfide bond" evidence="1">
    <location>
        <begin position="43"/>
        <end position="95"/>
    </location>
</feature>
<feature type="disulfide bond" evidence="1">
    <location>
        <begin position="49"/>
        <end position="122"/>
    </location>
</feature>
<feature type="disulfide bond" evidence="1">
    <location>
        <begin position="50"/>
        <end position="88"/>
    </location>
</feature>
<feature type="disulfide bond" evidence="1">
    <location>
        <begin position="57"/>
        <end position="81"/>
    </location>
</feature>
<feature type="disulfide bond" evidence="1">
    <location>
        <begin position="75"/>
        <end position="86"/>
    </location>
</feature>
<accession>P0DKR3</accession>
<comment type="function">
    <text>Heterodimer: presynaptic neurotoxin.</text>
</comment>
<comment type="function">
    <text>Monomer: Snake venom phospholipase A2 (PLA2) is inactive towards micellar phosphatidylcholine but is weakly active towards non-micellar dithiolecithin. PLA2 catalyzes the calcium-dependent hydrolysis of the 2-acyl groups in 3-sn-phosphoglycerides.</text>
</comment>
<comment type="catalytic activity">
    <reaction>
        <text>a 1,2-diacyl-sn-glycero-3-phosphocholine + H2O = a 1-acyl-sn-glycero-3-phosphocholine + a fatty acid + H(+)</text>
        <dbReference type="Rhea" id="RHEA:15801"/>
        <dbReference type="ChEBI" id="CHEBI:15377"/>
        <dbReference type="ChEBI" id="CHEBI:15378"/>
        <dbReference type="ChEBI" id="CHEBI:28868"/>
        <dbReference type="ChEBI" id="CHEBI:57643"/>
        <dbReference type="ChEBI" id="CHEBI:58168"/>
        <dbReference type="EC" id="3.1.1.4"/>
    </reaction>
</comment>
<comment type="cofactor">
    <cofactor evidence="1">
        <name>Ca(2+)</name>
        <dbReference type="ChEBI" id="CHEBI:29108"/>
    </cofactor>
    <text evidence="1">Binds 1 Ca(2+) ion.</text>
</comment>
<comment type="subunit">
    <text evidence="2">Heterodimer of an acidic subunit (CbIalpha or CbIbeta) and a basic subunit (CbII). The acidic subunit is non-toxic, and increases the toxicity of the basic subunit.</text>
</comment>
<comment type="subcellular location">
    <subcellularLocation>
        <location>Secreted</location>
    </subcellularLocation>
</comment>
<comment type="tissue specificity">
    <text>Expressed by the venom gland.</text>
</comment>
<comment type="similarity">
    <text evidence="3">Belongs to the phospholipase A2 family. Group II subfamily. D49 sub-subfamily.</text>
</comment>
<organism>
    <name type="scientific">Pseudocerastes fieldi</name>
    <name type="common">Field's horned viper</name>
    <name type="synonym">Pseudocerastes persicus fieldi</name>
    <dbReference type="NCBI Taxonomy" id="1355908"/>
    <lineage>
        <taxon>Eukaryota</taxon>
        <taxon>Metazoa</taxon>
        <taxon>Chordata</taxon>
        <taxon>Craniata</taxon>
        <taxon>Vertebrata</taxon>
        <taxon>Euteleostomi</taxon>
        <taxon>Lepidosauria</taxon>
        <taxon>Squamata</taxon>
        <taxon>Bifurcata</taxon>
        <taxon>Unidentata</taxon>
        <taxon>Episquamata</taxon>
        <taxon>Toxicofera</taxon>
        <taxon>Serpentes</taxon>
        <taxon>Colubroidea</taxon>
        <taxon>Viperidae</taxon>
        <taxon>Viperinae</taxon>
        <taxon>Pseudocerastes</taxon>
    </lineage>
</organism>